<organism>
    <name type="scientific">Dictyostelium discoideum</name>
    <name type="common">Social amoeba</name>
    <dbReference type="NCBI Taxonomy" id="44689"/>
    <lineage>
        <taxon>Eukaryota</taxon>
        <taxon>Amoebozoa</taxon>
        <taxon>Evosea</taxon>
        <taxon>Eumycetozoa</taxon>
        <taxon>Dictyostelia</taxon>
        <taxon>Dictyosteliales</taxon>
        <taxon>Dictyosteliaceae</taxon>
        <taxon>Dictyostelium</taxon>
    </lineage>
</organism>
<dbReference type="EC" id="1.1.1.42"/>
<dbReference type="EMBL" id="AAFI02000008">
    <property type="protein sequence ID" value="EAL71256.1"/>
    <property type="molecule type" value="Genomic_DNA"/>
</dbReference>
<dbReference type="RefSeq" id="XP_645283.1">
    <property type="nucleotide sequence ID" value="XM_640191.1"/>
</dbReference>
<dbReference type="SMR" id="Q75JR3"/>
<dbReference type="FunCoup" id="Q75JR3">
    <property type="interactions" value="778"/>
</dbReference>
<dbReference type="STRING" id="44689.Q75JR3"/>
<dbReference type="PaxDb" id="44689-DDB0231401"/>
<dbReference type="EnsemblProtists" id="EAL71256">
    <property type="protein sequence ID" value="EAL71256"/>
    <property type="gene ID" value="DDB_G0272208"/>
</dbReference>
<dbReference type="GeneID" id="8618449"/>
<dbReference type="KEGG" id="ddi:DDB_G0272208"/>
<dbReference type="dictyBase" id="DDB_G0272208">
    <property type="gene designation" value="idhC"/>
</dbReference>
<dbReference type="VEuPathDB" id="AmoebaDB:DDB_G0272208"/>
<dbReference type="eggNOG" id="KOG1526">
    <property type="taxonomic scope" value="Eukaryota"/>
</dbReference>
<dbReference type="HOGENOM" id="CLU_023296_1_0_1"/>
<dbReference type="InParanoid" id="Q75JR3"/>
<dbReference type="OMA" id="ENYETKW"/>
<dbReference type="PhylomeDB" id="Q75JR3"/>
<dbReference type="PRO" id="PR:Q75JR3"/>
<dbReference type="Proteomes" id="UP000002195">
    <property type="component" value="Chromosome 2"/>
</dbReference>
<dbReference type="GO" id="GO:0005829">
    <property type="term" value="C:cytosol"/>
    <property type="evidence" value="ECO:0000250"/>
    <property type="project" value="dictyBase"/>
</dbReference>
<dbReference type="GO" id="GO:0005739">
    <property type="term" value="C:mitochondrion"/>
    <property type="evidence" value="ECO:0000318"/>
    <property type="project" value="GO_Central"/>
</dbReference>
<dbReference type="GO" id="GO:0045335">
    <property type="term" value="C:phagocytic vesicle"/>
    <property type="evidence" value="ECO:0007005"/>
    <property type="project" value="dictyBase"/>
</dbReference>
<dbReference type="GO" id="GO:0004450">
    <property type="term" value="F:isocitrate dehydrogenase (NADP+) activity"/>
    <property type="evidence" value="ECO:0000250"/>
    <property type="project" value="UniProtKB"/>
</dbReference>
<dbReference type="GO" id="GO:0000287">
    <property type="term" value="F:magnesium ion binding"/>
    <property type="evidence" value="ECO:0000250"/>
    <property type="project" value="UniProtKB"/>
</dbReference>
<dbReference type="GO" id="GO:0051287">
    <property type="term" value="F:NAD binding"/>
    <property type="evidence" value="ECO:0007669"/>
    <property type="project" value="InterPro"/>
</dbReference>
<dbReference type="GO" id="GO:0006103">
    <property type="term" value="P:2-oxoglutarate metabolic process"/>
    <property type="evidence" value="ECO:0000250"/>
    <property type="project" value="UniProtKB"/>
</dbReference>
<dbReference type="GO" id="GO:0006097">
    <property type="term" value="P:glyoxylate cycle"/>
    <property type="evidence" value="ECO:0007669"/>
    <property type="project" value="UniProtKB-KW"/>
</dbReference>
<dbReference type="GO" id="GO:0006102">
    <property type="term" value="P:isocitrate metabolic process"/>
    <property type="evidence" value="ECO:0000250"/>
    <property type="project" value="UniProtKB"/>
</dbReference>
<dbReference type="GO" id="GO:0006739">
    <property type="term" value="P:NADP metabolic process"/>
    <property type="evidence" value="ECO:0000318"/>
    <property type="project" value="GO_Central"/>
</dbReference>
<dbReference type="GO" id="GO:0006099">
    <property type="term" value="P:tricarboxylic acid cycle"/>
    <property type="evidence" value="ECO:0007669"/>
    <property type="project" value="UniProtKB-KW"/>
</dbReference>
<dbReference type="FunFam" id="3.40.718.10:FF:000016">
    <property type="entry name" value="Isocitrate dehydrogenase [NADP]"/>
    <property type="match status" value="1"/>
</dbReference>
<dbReference type="Gene3D" id="3.40.718.10">
    <property type="entry name" value="Isopropylmalate Dehydrogenase"/>
    <property type="match status" value="1"/>
</dbReference>
<dbReference type="InterPro" id="IPR019818">
    <property type="entry name" value="IsoCit/isopropylmalate_DH_CS"/>
</dbReference>
<dbReference type="InterPro" id="IPR004790">
    <property type="entry name" value="Isocitrate_DH_NADP"/>
</dbReference>
<dbReference type="InterPro" id="IPR024084">
    <property type="entry name" value="IsoPropMal-DH-like_dom"/>
</dbReference>
<dbReference type="NCBIfam" id="TIGR00127">
    <property type="entry name" value="nadp_idh_euk"/>
    <property type="match status" value="1"/>
</dbReference>
<dbReference type="NCBIfam" id="NF006156">
    <property type="entry name" value="PRK08299.1"/>
    <property type="match status" value="1"/>
</dbReference>
<dbReference type="PANTHER" id="PTHR11822:SF15">
    <property type="entry name" value="ISOCITRATE DEHYDROGENASE [NADP] CYTOPLASMIC"/>
    <property type="match status" value="1"/>
</dbReference>
<dbReference type="PANTHER" id="PTHR11822">
    <property type="entry name" value="NADP-SPECIFIC ISOCITRATE DEHYDROGENASE"/>
    <property type="match status" value="1"/>
</dbReference>
<dbReference type="Pfam" id="PF00180">
    <property type="entry name" value="Iso_dh"/>
    <property type="match status" value="1"/>
</dbReference>
<dbReference type="PIRSF" id="PIRSF000108">
    <property type="entry name" value="IDH_NADP"/>
    <property type="match status" value="1"/>
</dbReference>
<dbReference type="SMART" id="SM01329">
    <property type="entry name" value="Iso_dh"/>
    <property type="match status" value="1"/>
</dbReference>
<dbReference type="SUPFAM" id="SSF53659">
    <property type="entry name" value="Isocitrate/Isopropylmalate dehydrogenase-like"/>
    <property type="match status" value="1"/>
</dbReference>
<dbReference type="PROSITE" id="PS00470">
    <property type="entry name" value="IDH_IMDH"/>
    <property type="match status" value="1"/>
</dbReference>
<proteinExistence type="evidence at protein level"/>
<gene>
    <name type="primary">idhC</name>
    <name type="ORF">DDB_G0272208</name>
</gene>
<protein>
    <recommendedName>
        <fullName>Isocitrate dehydrogenase [NADP] cytoplasmic</fullName>
        <ecNumber>1.1.1.42</ecNumber>
    </recommendedName>
    <alternativeName>
        <fullName>Cytosolic NADP-isocitrate dehydrogenase 1</fullName>
    </alternativeName>
    <alternativeName>
        <fullName>IDH 1</fullName>
    </alternativeName>
    <alternativeName>
        <fullName>IDP 1</fullName>
    </alternativeName>
    <alternativeName>
        <fullName>NADP(+)-specific ICDH 1</fullName>
    </alternativeName>
    <alternativeName>
        <fullName>Oxalosuccinate decarboxylase 1</fullName>
    </alternativeName>
</protein>
<reference key="1">
    <citation type="journal article" date="2002" name="Nature">
        <title>Sequence and analysis of chromosome 2 of Dictyostelium discoideum.</title>
        <authorList>
            <person name="Gloeckner G."/>
            <person name="Eichinger L."/>
            <person name="Szafranski K."/>
            <person name="Pachebat J.A."/>
            <person name="Bankier A.T."/>
            <person name="Dear P.H."/>
            <person name="Lehmann R."/>
            <person name="Baumgart C."/>
            <person name="Parra G."/>
            <person name="Abril J.F."/>
            <person name="Guigo R."/>
            <person name="Kumpf K."/>
            <person name="Tunggal B."/>
            <person name="Cox E.C."/>
            <person name="Quail M.A."/>
            <person name="Platzer M."/>
            <person name="Rosenthal A."/>
            <person name="Noegel A.A."/>
        </authorList>
    </citation>
    <scope>NUCLEOTIDE SEQUENCE [LARGE SCALE GENOMIC DNA]</scope>
    <source>
        <strain>AX4</strain>
    </source>
</reference>
<reference key="2">
    <citation type="journal article" date="2005" name="Nature">
        <title>The genome of the social amoeba Dictyostelium discoideum.</title>
        <authorList>
            <person name="Eichinger L."/>
            <person name="Pachebat J.A."/>
            <person name="Gloeckner G."/>
            <person name="Rajandream M.A."/>
            <person name="Sucgang R."/>
            <person name="Berriman M."/>
            <person name="Song J."/>
            <person name="Olsen R."/>
            <person name="Szafranski K."/>
            <person name="Xu Q."/>
            <person name="Tunggal B."/>
            <person name="Kummerfeld S."/>
            <person name="Madera M."/>
            <person name="Konfortov B.A."/>
            <person name="Rivero F."/>
            <person name="Bankier A.T."/>
            <person name="Lehmann R."/>
            <person name="Hamlin N."/>
            <person name="Davies R."/>
            <person name="Gaudet P."/>
            <person name="Fey P."/>
            <person name="Pilcher K."/>
            <person name="Chen G."/>
            <person name="Saunders D."/>
            <person name="Sodergren E.J."/>
            <person name="Davis P."/>
            <person name="Kerhornou A."/>
            <person name="Nie X."/>
            <person name="Hall N."/>
            <person name="Anjard C."/>
            <person name="Hemphill L."/>
            <person name="Bason N."/>
            <person name="Farbrother P."/>
            <person name="Desany B."/>
            <person name="Just E."/>
            <person name="Morio T."/>
            <person name="Rost R."/>
            <person name="Churcher C.M."/>
            <person name="Cooper J."/>
            <person name="Haydock S."/>
            <person name="van Driessche N."/>
            <person name="Cronin A."/>
            <person name="Goodhead I."/>
            <person name="Muzny D.M."/>
            <person name="Mourier T."/>
            <person name="Pain A."/>
            <person name="Lu M."/>
            <person name="Harper D."/>
            <person name="Lindsay R."/>
            <person name="Hauser H."/>
            <person name="James K.D."/>
            <person name="Quiles M."/>
            <person name="Madan Babu M."/>
            <person name="Saito T."/>
            <person name="Buchrieser C."/>
            <person name="Wardroper A."/>
            <person name="Felder M."/>
            <person name="Thangavelu M."/>
            <person name="Johnson D."/>
            <person name="Knights A."/>
            <person name="Loulseged H."/>
            <person name="Mungall K.L."/>
            <person name="Oliver K."/>
            <person name="Price C."/>
            <person name="Quail M.A."/>
            <person name="Urushihara H."/>
            <person name="Hernandez J."/>
            <person name="Rabbinowitsch E."/>
            <person name="Steffen D."/>
            <person name="Sanders M."/>
            <person name="Ma J."/>
            <person name="Kohara Y."/>
            <person name="Sharp S."/>
            <person name="Simmonds M.N."/>
            <person name="Spiegler S."/>
            <person name="Tivey A."/>
            <person name="Sugano S."/>
            <person name="White B."/>
            <person name="Walker D."/>
            <person name="Woodward J.R."/>
            <person name="Winckler T."/>
            <person name="Tanaka Y."/>
            <person name="Shaulsky G."/>
            <person name="Schleicher M."/>
            <person name="Weinstock G.M."/>
            <person name="Rosenthal A."/>
            <person name="Cox E.C."/>
            <person name="Chisholm R.L."/>
            <person name="Gibbs R.A."/>
            <person name="Loomis W.F."/>
            <person name="Platzer M."/>
            <person name="Kay R.R."/>
            <person name="Williams J.G."/>
            <person name="Dear P.H."/>
            <person name="Noegel A.A."/>
            <person name="Barrell B.G."/>
            <person name="Kuspa A."/>
        </authorList>
    </citation>
    <scope>NUCLEOTIDE SEQUENCE [LARGE SCALE GENOMIC DNA]</scope>
    <source>
        <strain>AX4</strain>
    </source>
</reference>
<reference key="3">
    <citation type="journal article" date="2006" name="Mol. Cell. Proteomics">
        <title>Proteomics fingerprinting of phagosome maturation and evidence for the role of a Galpha during uptake.</title>
        <authorList>
            <person name="Gotthardt D."/>
            <person name="Blancheteau V."/>
            <person name="Bosserhoff A."/>
            <person name="Ruppert T."/>
            <person name="Delorenzi M."/>
            <person name="Soldati T."/>
        </authorList>
    </citation>
    <scope>IDENTIFICATION BY MASS SPECTROMETRY [LARGE SCALE ANALYSIS]</scope>
    <source>
        <strain>AX2</strain>
    </source>
</reference>
<feature type="chain" id="PRO_0000328190" description="Isocitrate dehydrogenase [NADP] cytoplasmic">
    <location>
        <begin position="1"/>
        <end position="412"/>
    </location>
</feature>
<feature type="binding site" evidence="1">
    <location>
        <begin position="76"/>
        <end position="78"/>
    </location>
    <ligand>
        <name>NADP(+)</name>
        <dbReference type="ChEBI" id="CHEBI:58349"/>
    </ligand>
</feature>
<feature type="binding site" evidence="1">
    <location>
        <position position="78"/>
    </location>
    <ligand>
        <name>substrate</name>
    </ligand>
</feature>
<feature type="binding site" evidence="1">
    <location>
        <position position="83"/>
    </location>
    <ligand>
        <name>NADP(+)</name>
        <dbReference type="ChEBI" id="CHEBI:58349"/>
    </ligand>
</feature>
<feature type="binding site" evidence="1">
    <location>
        <begin position="95"/>
        <end position="101"/>
    </location>
    <ligand>
        <name>substrate</name>
    </ligand>
</feature>
<feature type="binding site" evidence="1">
    <location>
        <position position="110"/>
    </location>
    <ligand>
        <name>substrate</name>
    </ligand>
</feature>
<feature type="binding site" evidence="1">
    <location>
        <position position="133"/>
    </location>
    <ligand>
        <name>substrate</name>
    </ligand>
</feature>
<feature type="binding site" evidence="1">
    <location>
        <position position="253"/>
    </location>
    <ligand>
        <name>Mn(2+)</name>
        <dbReference type="ChEBI" id="CHEBI:29035"/>
    </ligand>
</feature>
<feature type="binding site" evidence="1">
    <location>
        <position position="261"/>
    </location>
    <ligand>
        <name>NADP(+)</name>
        <dbReference type="ChEBI" id="CHEBI:58349"/>
    </ligand>
</feature>
<feature type="binding site" evidence="1">
    <location>
        <position position="276"/>
    </location>
    <ligand>
        <name>Mn(2+)</name>
        <dbReference type="ChEBI" id="CHEBI:29035"/>
    </ligand>
</feature>
<feature type="binding site" evidence="1">
    <location>
        <begin position="309"/>
        <end position="314"/>
    </location>
    <ligand>
        <name>NADP(+)</name>
        <dbReference type="ChEBI" id="CHEBI:58349"/>
    </ligand>
</feature>
<feature type="binding site" evidence="1">
    <location>
        <position position="327"/>
    </location>
    <ligand>
        <name>NADP(+)</name>
        <dbReference type="ChEBI" id="CHEBI:58349"/>
    </ligand>
</feature>
<feature type="site" description="Critical for catalysis" evidence="1">
    <location>
        <position position="140"/>
    </location>
</feature>
<feature type="site" description="Critical for catalysis" evidence="1">
    <location>
        <position position="213"/>
    </location>
</feature>
<keyword id="KW-0963">Cytoplasm</keyword>
<keyword id="KW-0329">Glyoxylate bypass</keyword>
<keyword id="KW-0460">Magnesium</keyword>
<keyword id="KW-0464">Manganese</keyword>
<keyword id="KW-0479">Metal-binding</keyword>
<keyword id="KW-0521">NADP</keyword>
<keyword id="KW-0560">Oxidoreductase</keyword>
<keyword id="KW-1185">Reference proteome</keyword>
<keyword id="KW-0816">Tricarboxylic acid cycle</keyword>
<accession>Q75JR3</accession>
<accession>Q559Q1</accession>
<sequence length="412" mass="46370">MVEKIIVSNPVANLLGDEQTRVIWDLIEKKLIFPFLDLKVETYDLGIEYRDKTNDQVTIDAANAIKRLKVGIKCATITPDEARVTEFGLKEMWKSPNGTIRNTLGGTLFREPIVCKNVPRLVTCWNKSIVIGRHAFGDQYRATDFVVKGAGKLELTYTPADGSAPQKFQVFDFPSDGGVALGMYNTDASIKEFAYACFNFSLDKKWPLYLSTKNTILKRYDGRFKDIFQEIYEREYKVKFDTAGIWYEHRLIDDMVAYAMKSEGGFVWACKNYDGDVQSDAVAQGYGSLGLMTSVLLSADSLVAEASHGTVTRHFREHQKGRETSTNSIASIFAWTRGLEYRAKLDNNDKLLKFCHALEASCIDAVESGFMTKDLAICVKGSVENVKRTDYLNTEEYINKVAELLVSKLTAL</sequence>
<comment type="catalytic activity">
    <reaction>
        <text>D-threo-isocitrate + NADP(+) = 2-oxoglutarate + CO2 + NADPH</text>
        <dbReference type="Rhea" id="RHEA:19629"/>
        <dbReference type="ChEBI" id="CHEBI:15562"/>
        <dbReference type="ChEBI" id="CHEBI:16526"/>
        <dbReference type="ChEBI" id="CHEBI:16810"/>
        <dbReference type="ChEBI" id="CHEBI:57783"/>
        <dbReference type="ChEBI" id="CHEBI:58349"/>
        <dbReference type="EC" id="1.1.1.42"/>
    </reaction>
</comment>
<comment type="cofactor">
    <cofactor evidence="1">
        <name>Mg(2+)</name>
        <dbReference type="ChEBI" id="CHEBI:18420"/>
    </cofactor>
    <cofactor evidence="1">
        <name>Mn(2+)</name>
        <dbReference type="ChEBI" id="CHEBI:29035"/>
    </cofactor>
    <text evidence="1">Binds 1 Mg(2+) or Mn(2+) ion per subunit.</text>
</comment>
<comment type="subunit">
    <text evidence="1">Homodimer.</text>
</comment>
<comment type="subcellular location">
    <subcellularLocation>
        <location evidence="1">Cytoplasm</location>
    </subcellularLocation>
</comment>
<comment type="similarity">
    <text evidence="2">Belongs to the isocitrate and isopropylmalate dehydrogenases family.</text>
</comment>
<evidence type="ECO:0000250" key="1"/>
<evidence type="ECO:0000305" key="2"/>
<name>IDHC_DICDI</name>